<comment type="function">
    <text evidence="1 6">Destroys radicals which are normally produced within the cells and which are toxic to biological systems (By similarity). Plays an important role in the phase transition, and may be important in vivo, as it would facilitate the intracellular survival of the fungus by providing a non-toxic environment in the macrophage phagolysosomes (PubMed:17654267).</text>
</comment>
<comment type="catalytic activity">
    <reaction evidence="3">
        <text>2 superoxide + 2 H(+) = H2O2 + O2</text>
        <dbReference type="Rhea" id="RHEA:20696"/>
        <dbReference type="ChEBI" id="CHEBI:15378"/>
        <dbReference type="ChEBI" id="CHEBI:15379"/>
        <dbReference type="ChEBI" id="CHEBI:16240"/>
        <dbReference type="ChEBI" id="CHEBI:18421"/>
        <dbReference type="EC" id="1.15.1.1"/>
    </reaction>
</comment>
<comment type="cofactor">
    <cofactor evidence="1">
        <name>Cu cation</name>
        <dbReference type="ChEBI" id="CHEBI:23378"/>
    </cofactor>
    <text evidence="1">Binds 1 copper ion per subunit.</text>
</comment>
<comment type="cofactor">
    <cofactor evidence="1">
        <name>Zn(2+)</name>
        <dbReference type="ChEBI" id="CHEBI:29105"/>
    </cofactor>
    <text evidence="1">Binds 1 zinc ion per subunit.</text>
</comment>
<comment type="subunit">
    <text evidence="1">Homodimer.</text>
</comment>
<comment type="subcellular location">
    <subcellularLocation>
        <location evidence="1">Cytoplasm</location>
    </subcellularLocation>
</comment>
<comment type="induction">
    <text evidence="6">Expression is down-regulated in the mycelia phase, whereas it is increased in the yeast phase (PubMed:17654267). Induced during macrophage infection (PubMed:17654267).</text>
</comment>
<comment type="similarity">
    <text evidence="4">Belongs to the Cu-Zn superoxide dismutase family.</text>
</comment>
<accession>Q19VG9</accession>
<protein>
    <recommendedName>
        <fullName evidence="7">Superoxide dismutase [Cu-Zn]</fullName>
        <ecNumber evidence="3">1.15.1.1</ecNumber>
    </recommendedName>
</protein>
<evidence type="ECO:0000250" key="1">
    <source>
        <dbReference type="UniProtKB" id="P00442"/>
    </source>
</evidence>
<evidence type="ECO:0000250" key="2">
    <source>
        <dbReference type="UniProtKB" id="P00445"/>
    </source>
</evidence>
<evidence type="ECO:0000250" key="3">
    <source>
        <dbReference type="UniProtKB" id="P85978"/>
    </source>
</evidence>
<evidence type="ECO:0000255" key="4"/>
<evidence type="ECO:0000256" key="5">
    <source>
        <dbReference type="SAM" id="MobiDB-lite"/>
    </source>
</evidence>
<evidence type="ECO:0000269" key="6">
    <source>
    </source>
</evidence>
<evidence type="ECO:0000303" key="7">
    <source>
    </source>
</evidence>
<feature type="chain" id="PRO_0000460607" description="Superoxide dismutase [Cu-Zn]">
    <location>
        <begin position="1"/>
        <end position="154"/>
    </location>
</feature>
<feature type="region of interest" description="Disordered" evidence="5">
    <location>
        <begin position="126"/>
        <end position="147"/>
    </location>
</feature>
<feature type="compositionally biased region" description="Basic and acidic residues" evidence="5">
    <location>
        <begin position="126"/>
        <end position="137"/>
    </location>
</feature>
<feature type="binding site" evidence="2">
    <location>
        <position position="47"/>
    </location>
    <ligand>
        <name>Cu cation</name>
        <dbReference type="ChEBI" id="CHEBI:23378"/>
        <note>catalytic</note>
    </ligand>
</feature>
<feature type="binding site" evidence="2">
    <location>
        <position position="49"/>
    </location>
    <ligand>
        <name>Cu cation</name>
        <dbReference type="ChEBI" id="CHEBI:23378"/>
        <note>catalytic</note>
    </ligand>
</feature>
<feature type="binding site" evidence="2">
    <location>
        <position position="64"/>
    </location>
    <ligand>
        <name>Cu cation</name>
        <dbReference type="ChEBI" id="CHEBI:23378"/>
        <note>catalytic</note>
    </ligand>
</feature>
<feature type="binding site" evidence="2">
    <location>
        <position position="64"/>
    </location>
    <ligand>
        <name>Zn(2+)</name>
        <dbReference type="ChEBI" id="CHEBI:29105"/>
        <note>structural</note>
    </ligand>
</feature>
<feature type="binding site" evidence="2">
    <location>
        <position position="72"/>
    </location>
    <ligand>
        <name>Zn(2+)</name>
        <dbReference type="ChEBI" id="CHEBI:29105"/>
        <note>structural</note>
    </ligand>
</feature>
<feature type="binding site" evidence="2">
    <location>
        <position position="81"/>
    </location>
    <ligand>
        <name>Zn(2+)</name>
        <dbReference type="ChEBI" id="CHEBI:29105"/>
        <note>structural</note>
    </ligand>
</feature>
<feature type="binding site" evidence="2">
    <location>
        <position position="84"/>
    </location>
    <ligand>
        <name>Zn(2+)</name>
        <dbReference type="ChEBI" id="CHEBI:29105"/>
        <note>structural</note>
    </ligand>
</feature>
<feature type="binding site" evidence="2">
    <location>
        <position position="121"/>
    </location>
    <ligand>
        <name>Cu cation</name>
        <dbReference type="ChEBI" id="CHEBI:23378"/>
        <note>catalytic</note>
    </ligand>
</feature>
<feature type="disulfide bond" evidence="1">
    <location>
        <begin position="58"/>
        <end position="147"/>
    </location>
</feature>
<name>SODA_TALMA</name>
<dbReference type="EC" id="1.15.1.1" evidence="3"/>
<dbReference type="EMBL" id="DQ413185">
    <property type="protein sequence ID" value="ABD67502.1"/>
    <property type="molecule type" value="mRNA"/>
</dbReference>
<dbReference type="SMR" id="Q19VG9"/>
<dbReference type="VEuPathDB" id="FungiDB:PMAA_079420"/>
<dbReference type="OrthoDB" id="2015551at2759"/>
<dbReference type="GO" id="GO:0005737">
    <property type="term" value="C:cytoplasm"/>
    <property type="evidence" value="ECO:0007669"/>
    <property type="project" value="UniProtKB-SubCell"/>
</dbReference>
<dbReference type="GO" id="GO:0005507">
    <property type="term" value="F:copper ion binding"/>
    <property type="evidence" value="ECO:0007669"/>
    <property type="project" value="InterPro"/>
</dbReference>
<dbReference type="GO" id="GO:0004784">
    <property type="term" value="F:superoxide dismutase activity"/>
    <property type="evidence" value="ECO:0007669"/>
    <property type="project" value="UniProtKB-EC"/>
</dbReference>
<dbReference type="CDD" id="cd00305">
    <property type="entry name" value="Cu-Zn_Superoxide_Dismutase"/>
    <property type="match status" value="1"/>
</dbReference>
<dbReference type="FunFam" id="2.60.40.200:FF:000001">
    <property type="entry name" value="Superoxide dismutase [Cu-Zn]"/>
    <property type="match status" value="1"/>
</dbReference>
<dbReference type="Gene3D" id="2.60.40.200">
    <property type="entry name" value="Superoxide dismutase, copper/zinc binding domain"/>
    <property type="match status" value="1"/>
</dbReference>
<dbReference type="InterPro" id="IPR036423">
    <property type="entry name" value="SOD-like_Cu/Zn_dom_sf"/>
</dbReference>
<dbReference type="InterPro" id="IPR024134">
    <property type="entry name" value="SOD_Cu/Zn_/chaperone"/>
</dbReference>
<dbReference type="InterPro" id="IPR018152">
    <property type="entry name" value="SOD_Cu/Zn_BS"/>
</dbReference>
<dbReference type="InterPro" id="IPR001424">
    <property type="entry name" value="SOD_Cu_Zn_dom"/>
</dbReference>
<dbReference type="PANTHER" id="PTHR10003">
    <property type="entry name" value="SUPEROXIDE DISMUTASE CU-ZN -RELATED"/>
    <property type="match status" value="1"/>
</dbReference>
<dbReference type="Pfam" id="PF00080">
    <property type="entry name" value="Sod_Cu"/>
    <property type="match status" value="1"/>
</dbReference>
<dbReference type="PRINTS" id="PR00068">
    <property type="entry name" value="CUZNDISMTASE"/>
</dbReference>
<dbReference type="SUPFAM" id="SSF49329">
    <property type="entry name" value="Cu,Zn superoxide dismutase-like"/>
    <property type="match status" value="1"/>
</dbReference>
<dbReference type="PROSITE" id="PS00087">
    <property type="entry name" value="SOD_CU_ZN_1"/>
    <property type="match status" value="1"/>
</dbReference>
<dbReference type="PROSITE" id="PS00332">
    <property type="entry name" value="SOD_CU_ZN_2"/>
    <property type="match status" value="1"/>
</dbReference>
<organism>
    <name type="scientific">Talaromyces marneffei</name>
    <name type="common">Penicillium marneffei</name>
    <dbReference type="NCBI Taxonomy" id="37727"/>
    <lineage>
        <taxon>Eukaryota</taxon>
        <taxon>Fungi</taxon>
        <taxon>Dikarya</taxon>
        <taxon>Ascomycota</taxon>
        <taxon>Pezizomycotina</taxon>
        <taxon>Eurotiomycetes</taxon>
        <taxon>Eurotiomycetidae</taxon>
        <taxon>Eurotiales</taxon>
        <taxon>Trichocomaceae</taxon>
        <taxon>Talaromyces</taxon>
        <taxon>Talaromyces sect. Talaromyces</taxon>
    </lineage>
</organism>
<keyword id="KW-0049">Antioxidant</keyword>
<keyword id="KW-0186">Copper</keyword>
<keyword id="KW-0963">Cytoplasm</keyword>
<keyword id="KW-1015">Disulfide bond</keyword>
<keyword id="KW-0479">Metal-binding</keyword>
<keyword id="KW-0560">Oxidoreductase</keyword>
<keyword id="KW-0843">Virulence</keyword>
<keyword id="KW-0862">Zinc</keyword>
<gene>
    <name evidence="7" type="primary">sodA</name>
</gene>
<reference key="1">
    <citation type="journal article" date="2007" name="Med. Mycol.">
        <title>The copper, zinc superoxide dismutase gene of Penicillium marneffei: cloning, characterization, and differential expression during phase transition and macrophage infection.</title>
        <authorList>
            <person name="Thirach S."/>
            <person name="Cooper C.R."/>
            <person name="Vanittanakom P."/>
            <person name="Vanittanakom N."/>
        </authorList>
    </citation>
    <scope>NUCLEOTIDE SEQUENCE [MRNA]</scope>
    <scope>FUNCTION</scope>
    <scope>INDUCTION</scope>
    <source>
        <strain>CBS 119456</strain>
    </source>
</reference>
<sequence length="154" mass="15987">MVKAVAVLRGDSNIKGTVTFEQADENSPTTISWNITGHDANAERGIHVHQFGDNTNGCTSAGPHFNPFGKTHGAPTDDERHVGDLGNFKTDAQGNAVGFVEDKLIKLIGAESVLGRTIVVHAGTDDLGRGGNEESKKTGNAGPRPACGVIGISA</sequence>
<proteinExistence type="evidence at transcript level"/>